<evidence type="ECO:0000255" key="1">
    <source>
        <dbReference type="HAMAP-Rule" id="MF_00282"/>
    </source>
</evidence>
<reference key="1">
    <citation type="journal article" date="2000" name="Proc. Natl. Acad. Sci. U.S.A.">
        <title>Genome sequence of Halobacterium species NRC-1.</title>
        <authorList>
            <person name="Ng W.V."/>
            <person name="Kennedy S.P."/>
            <person name="Mahairas G.G."/>
            <person name="Berquist B."/>
            <person name="Pan M."/>
            <person name="Shukla H.D."/>
            <person name="Lasky S.R."/>
            <person name="Baliga N.S."/>
            <person name="Thorsson V."/>
            <person name="Sbrogna J."/>
            <person name="Swartzell S."/>
            <person name="Weir D."/>
            <person name="Hall J."/>
            <person name="Dahl T.A."/>
            <person name="Welti R."/>
            <person name="Goo Y.A."/>
            <person name="Leithauser B."/>
            <person name="Keller K."/>
            <person name="Cruz R."/>
            <person name="Danson M.J."/>
            <person name="Hough D.W."/>
            <person name="Maddocks D.G."/>
            <person name="Jablonski P.E."/>
            <person name="Krebs M.P."/>
            <person name="Angevine C.M."/>
            <person name="Dale H."/>
            <person name="Isenbarger T.A."/>
            <person name="Peck R.F."/>
            <person name="Pohlschroder M."/>
            <person name="Spudich J.L."/>
            <person name="Jung K.-H."/>
            <person name="Alam M."/>
            <person name="Freitas T."/>
            <person name="Hou S."/>
            <person name="Daniels C.J."/>
            <person name="Dennis P.P."/>
            <person name="Omer A.D."/>
            <person name="Ebhardt H."/>
            <person name="Lowe T.M."/>
            <person name="Liang P."/>
            <person name="Riley M."/>
            <person name="Hood L."/>
            <person name="DasSarma S."/>
        </authorList>
    </citation>
    <scope>NUCLEOTIDE SEQUENCE [LARGE SCALE GENOMIC DNA]</scope>
    <source>
        <strain>ATCC 700922 / JCM 11081 / NRC-1</strain>
    </source>
</reference>
<keyword id="KW-0030">Aminoacyl-tRNA synthetase</keyword>
<keyword id="KW-0067">ATP-binding</keyword>
<keyword id="KW-0963">Cytoplasm</keyword>
<keyword id="KW-0436">Ligase</keyword>
<keyword id="KW-0460">Magnesium</keyword>
<keyword id="KW-0479">Metal-binding</keyword>
<keyword id="KW-0547">Nucleotide-binding</keyword>
<keyword id="KW-0648">Protein biosynthesis</keyword>
<keyword id="KW-1185">Reference proteome</keyword>
<protein>
    <recommendedName>
        <fullName evidence="1">Phenylalanine--tRNA ligase alpha subunit</fullName>
        <ecNumber evidence="1">6.1.1.20</ecNumber>
    </recommendedName>
    <alternativeName>
        <fullName evidence="1">Phenylalanyl-tRNA synthetase alpha subunit</fullName>
        <shortName evidence="1">PheRS</shortName>
    </alternativeName>
</protein>
<sequence>MQLPTQQVAVLDAASTDDPQRIEALAADTDYPPETIAGAALALEAEGLVAVTETTTTTVSLTDEGHAYATDGLPEVRLYRAALDAGADDAPVEMGSVIGAAGLDGPQVDIALSNYARKGYGTIDSGALAADPDADPENDPEADALATLTDGDSVDDDAVVDQLASRDLVTVSERTVRSVTLTEAGVTELMAGVEATDEVGELTPELLASGEWADVEFADYNVAADAADHTPGKTHVLRQAAERVTDVLVGMGFQEMAGPHVDADFYINDCLFMPQDHPARNHWDRFALSNPARIDELPDALVERVERAHREGAGDDGDGYHSPWDEDFARALALRGHTTSLTARHLAGLADADVEAPARYFSVEKAYRNDTLDATHLLEFFQIEGWVLADDLSVRDLMGTFREFYSQFGIHDLQFKPTYNPYTEPSFELFGRHPETGELIEIGNSGIFRPEMLDPLDVDGDVMAWGLALERLLMLMTGFEDIRDVHGTLCDVGFLRNAEVVY</sequence>
<organism>
    <name type="scientific">Halobacterium salinarum (strain ATCC 700922 / JCM 11081 / NRC-1)</name>
    <name type="common">Halobacterium halobium</name>
    <dbReference type="NCBI Taxonomy" id="64091"/>
    <lineage>
        <taxon>Archaea</taxon>
        <taxon>Methanobacteriati</taxon>
        <taxon>Methanobacteriota</taxon>
        <taxon>Stenosarchaea group</taxon>
        <taxon>Halobacteria</taxon>
        <taxon>Halobacteriales</taxon>
        <taxon>Halobacteriaceae</taxon>
        <taxon>Halobacterium</taxon>
        <taxon>Halobacterium salinarum NRC-34001</taxon>
    </lineage>
</organism>
<comment type="catalytic activity">
    <reaction evidence="1">
        <text>tRNA(Phe) + L-phenylalanine + ATP = L-phenylalanyl-tRNA(Phe) + AMP + diphosphate + H(+)</text>
        <dbReference type="Rhea" id="RHEA:19413"/>
        <dbReference type="Rhea" id="RHEA-COMP:9668"/>
        <dbReference type="Rhea" id="RHEA-COMP:9699"/>
        <dbReference type="ChEBI" id="CHEBI:15378"/>
        <dbReference type="ChEBI" id="CHEBI:30616"/>
        <dbReference type="ChEBI" id="CHEBI:33019"/>
        <dbReference type="ChEBI" id="CHEBI:58095"/>
        <dbReference type="ChEBI" id="CHEBI:78442"/>
        <dbReference type="ChEBI" id="CHEBI:78531"/>
        <dbReference type="ChEBI" id="CHEBI:456215"/>
        <dbReference type="EC" id="6.1.1.20"/>
    </reaction>
</comment>
<comment type="cofactor">
    <cofactor evidence="1">
        <name>Mg(2+)</name>
        <dbReference type="ChEBI" id="CHEBI:18420"/>
    </cofactor>
    <text evidence="1">Binds 2 magnesium ions per tetramer.</text>
</comment>
<comment type="subunit">
    <text evidence="1">Tetramer of two alpha and two beta subunits.</text>
</comment>
<comment type="subcellular location">
    <subcellularLocation>
        <location evidence="1">Cytoplasm</location>
    </subcellularLocation>
</comment>
<comment type="similarity">
    <text evidence="1">Belongs to the class-II aminoacyl-tRNA synthetase family. Phe-tRNA synthetase alpha subunit type 2 subfamily.</text>
</comment>
<gene>
    <name evidence="1" type="primary">pheS</name>
    <name type="ordered locus">VNG_2504G</name>
</gene>
<feature type="chain" id="PRO_0000126808" description="Phenylalanine--tRNA ligase alpha subunit">
    <location>
        <begin position="1"/>
        <end position="502"/>
    </location>
</feature>
<feature type="binding site" evidence="1">
    <location>
        <position position="339"/>
    </location>
    <ligand>
        <name>L-phenylalanine</name>
        <dbReference type="ChEBI" id="CHEBI:58095"/>
    </ligand>
</feature>
<feature type="binding site" evidence="1">
    <location>
        <begin position="382"/>
        <end position="384"/>
    </location>
    <ligand>
        <name>L-phenylalanine</name>
        <dbReference type="ChEBI" id="CHEBI:58095"/>
    </ligand>
</feature>
<feature type="binding site" evidence="1">
    <location>
        <position position="422"/>
    </location>
    <ligand>
        <name>L-phenylalanine</name>
        <dbReference type="ChEBI" id="CHEBI:58095"/>
    </ligand>
</feature>
<feature type="binding site" evidence="1">
    <location>
        <position position="424"/>
    </location>
    <ligand>
        <name>Mg(2+)</name>
        <dbReference type="ChEBI" id="CHEBI:18420"/>
        <note>shared with beta subunit</note>
    </ligand>
</feature>
<feature type="binding site" evidence="1">
    <location>
        <position position="448"/>
    </location>
    <ligand>
        <name>L-phenylalanine</name>
        <dbReference type="ChEBI" id="CHEBI:58095"/>
    </ligand>
</feature>
<name>SYFA_HALSA</name>
<accession>Q9HMK4</accession>
<proteinExistence type="inferred from homology"/>
<dbReference type="EC" id="6.1.1.20" evidence="1"/>
<dbReference type="EMBL" id="AE004437">
    <property type="protein sequence ID" value="AAG20567.1"/>
    <property type="molecule type" value="Genomic_DNA"/>
</dbReference>
<dbReference type="PIR" id="C84400">
    <property type="entry name" value="C84400"/>
</dbReference>
<dbReference type="RefSeq" id="WP_010903869.1">
    <property type="nucleotide sequence ID" value="NC_002607.1"/>
</dbReference>
<dbReference type="SMR" id="Q9HMK4"/>
<dbReference type="FunCoup" id="Q9HMK4">
    <property type="interactions" value="225"/>
</dbReference>
<dbReference type="STRING" id="64091.VNG_2504G"/>
<dbReference type="PaxDb" id="64091-VNG_2504G"/>
<dbReference type="KEGG" id="hal:VNG_2504G"/>
<dbReference type="PATRIC" id="fig|64091.14.peg.1939"/>
<dbReference type="HOGENOM" id="CLU_025086_2_2_2"/>
<dbReference type="InParanoid" id="Q9HMK4"/>
<dbReference type="OrthoDB" id="372178at2157"/>
<dbReference type="PhylomeDB" id="Q9HMK4"/>
<dbReference type="Proteomes" id="UP000000554">
    <property type="component" value="Chromosome"/>
</dbReference>
<dbReference type="GO" id="GO:0005737">
    <property type="term" value="C:cytoplasm"/>
    <property type="evidence" value="ECO:0000318"/>
    <property type="project" value="GO_Central"/>
</dbReference>
<dbReference type="GO" id="GO:0005524">
    <property type="term" value="F:ATP binding"/>
    <property type="evidence" value="ECO:0007669"/>
    <property type="project" value="UniProtKB-UniRule"/>
</dbReference>
<dbReference type="GO" id="GO:0000287">
    <property type="term" value="F:magnesium ion binding"/>
    <property type="evidence" value="ECO:0007669"/>
    <property type="project" value="UniProtKB-UniRule"/>
</dbReference>
<dbReference type="GO" id="GO:0004826">
    <property type="term" value="F:phenylalanine-tRNA ligase activity"/>
    <property type="evidence" value="ECO:0000318"/>
    <property type="project" value="GO_Central"/>
</dbReference>
<dbReference type="GO" id="GO:0000049">
    <property type="term" value="F:tRNA binding"/>
    <property type="evidence" value="ECO:0007669"/>
    <property type="project" value="InterPro"/>
</dbReference>
<dbReference type="GO" id="GO:0006432">
    <property type="term" value="P:phenylalanyl-tRNA aminoacylation"/>
    <property type="evidence" value="ECO:0000318"/>
    <property type="project" value="GO_Central"/>
</dbReference>
<dbReference type="CDD" id="cd00496">
    <property type="entry name" value="PheRS_alpha_core"/>
    <property type="match status" value="1"/>
</dbReference>
<dbReference type="FunFam" id="3.30.930.10:FF:000233">
    <property type="entry name" value="Phenylalanine--tRNA ligase alpha subunit"/>
    <property type="match status" value="1"/>
</dbReference>
<dbReference type="Gene3D" id="3.30.930.10">
    <property type="entry name" value="Bira Bifunctional Protein, Domain 2"/>
    <property type="match status" value="1"/>
</dbReference>
<dbReference type="Gene3D" id="1.10.10.10">
    <property type="entry name" value="Winged helix-like DNA-binding domain superfamily/Winged helix DNA-binding domain"/>
    <property type="match status" value="1"/>
</dbReference>
<dbReference type="HAMAP" id="MF_00282">
    <property type="entry name" value="Phe_tRNA_synth_alpha2"/>
    <property type="match status" value="1"/>
</dbReference>
<dbReference type="InterPro" id="IPR006195">
    <property type="entry name" value="aa-tRNA-synth_II"/>
</dbReference>
<dbReference type="InterPro" id="IPR045864">
    <property type="entry name" value="aa-tRNA-synth_II/BPL/LPL"/>
</dbReference>
<dbReference type="InterPro" id="IPR004529">
    <property type="entry name" value="Phe-tRNA-synth_IIc_asu"/>
</dbReference>
<dbReference type="InterPro" id="IPR022917">
    <property type="entry name" value="Phe_tRNA_ligase_alpha_bac/arc"/>
</dbReference>
<dbReference type="InterPro" id="IPR002319">
    <property type="entry name" value="Phenylalanyl-tRNA_Synthase"/>
</dbReference>
<dbReference type="InterPro" id="IPR036388">
    <property type="entry name" value="WH-like_DNA-bd_sf"/>
</dbReference>
<dbReference type="NCBIfam" id="TIGR00468">
    <property type="entry name" value="pheS"/>
    <property type="match status" value="1"/>
</dbReference>
<dbReference type="NCBIfam" id="NF003210">
    <property type="entry name" value="PRK04172.1"/>
    <property type="match status" value="1"/>
</dbReference>
<dbReference type="PANTHER" id="PTHR11538:SF40">
    <property type="entry name" value="PHENYLALANINE--TRNA LIGASE ALPHA SUBUNIT"/>
    <property type="match status" value="1"/>
</dbReference>
<dbReference type="PANTHER" id="PTHR11538">
    <property type="entry name" value="PHENYLALANYL-TRNA SYNTHETASE"/>
    <property type="match status" value="1"/>
</dbReference>
<dbReference type="Pfam" id="PF01409">
    <property type="entry name" value="tRNA-synt_2d"/>
    <property type="match status" value="1"/>
</dbReference>
<dbReference type="SUPFAM" id="SSF55681">
    <property type="entry name" value="Class II aaRS and biotin synthetases"/>
    <property type="match status" value="1"/>
</dbReference>
<dbReference type="PROSITE" id="PS50862">
    <property type="entry name" value="AA_TRNA_LIGASE_II"/>
    <property type="match status" value="1"/>
</dbReference>